<reference key="1">
    <citation type="submission" date="2007-06" db="EMBL/GenBank/DDBJ databases">
        <title>Complete sequence of chromosome of Staphylococcus aureus subsp. aureus JH1.</title>
        <authorList>
            <consortium name="US DOE Joint Genome Institute"/>
            <person name="Copeland A."/>
            <person name="Lucas S."/>
            <person name="Lapidus A."/>
            <person name="Barry K."/>
            <person name="Detter J.C."/>
            <person name="Glavina del Rio T."/>
            <person name="Hammon N."/>
            <person name="Israni S."/>
            <person name="Dalin E."/>
            <person name="Tice H."/>
            <person name="Pitluck S."/>
            <person name="Chain P."/>
            <person name="Malfatti S."/>
            <person name="Shin M."/>
            <person name="Vergez L."/>
            <person name="Schmutz J."/>
            <person name="Larimer F."/>
            <person name="Land M."/>
            <person name="Hauser L."/>
            <person name="Kyrpides N."/>
            <person name="Ivanova N."/>
            <person name="Tomasz A."/>
            <person name="Richardson P."/>
        </authorList>
    </citation>
    <scope>NUCLEOTIDE SEQUENCE [LARGE SCALE GENOMIC DNA]</scope>
    <source>
        <strain>JH1</strain>
    </source>
</reference>
<keyword id="KW-0119">Carbohydrate metabolism</keyword>
<keyword id="KW-0963">Cytoplasm</keyword>
<keyword id="KW-0456">Lyase</keyword>
<keyword id="KW-0704">Schiff base</keyword>
<feature type="chain" id="PRO_1000085740" description="N-acetylneuraminate lyase">
    <location>
        <begin position="1"/>
        <end position="293"/>
    </location>
</feature>
<feature type="active site" description="Proton donor" evidence="1">
    <location>
        <position position="137"/>
    </location>
</feature>
<feature type="active site" description="Schiff-base intermediate with substrate" evidence="1">
    <location>
        <position position="165"/>
    </location>
</feature>
<feature type="binding site" evidence="1">
    <location>
        <position position="48"/>
    </location>
    <ligand>
        <name>aceneuramate</name>
        <dbReference type="ChEBI" id="CHEBI:173083"/>
    </ligand>
</feature>
<feature type="binding site" evidence="1">
    <location>
        <position position="49"/>
    </location>
    <ligand>
        <name>aceneuramate</name>
        <dbReference type="ChEBI" id="CHEBI:173083"/>
    </ligand>
</feature>
<feature type="binding site" evidence="1">
    <location>
        <position position="167"/>
    </location>
    <ligand>
        <name>aceneuramate</name>
        <dbReference type="ChEBI" id="CHEBI:173083"/>
    </ligand>
</feature>
<feature type="binding site" evidence="1">
    <location>
        <position position="189"/>
    </location>
    <ligand>
        <name>aceneuramate</name>
        <dbReference type="ChEBI" id="CHEBI:173083"/>
    </ligand>
</feature>
<feature type="binding site" evidence="1">
    <location>
        <position position="191"/>
    </location>
    <ligand>
        <name>aceneuramate</name>
        <dbReference type="ChEBI" id="CHEBI:173083"/>
    </ligand>
</feature>
<feature type="binding site" evidence="1">
    <location>
        <position position="192"/>
    </location>
    <ligand>
        <name>aceneuramate</name>
        <dbReference type="ChEBI" id="CHEBI:173083"/>
    </ligand>
</feature>
<feature type="binding site" evidence="1">
    <location>
        <position position="208"/>
    </location>
    <ligand>
        <name>aceneuramate</name>
        <dbReference type="ChEBI" id="CHEBI:173083"/>
    </ligand>
</feature>
<proteinExistence type="inferred from homology"/>
<accession>A6TY99</accession>
<organism>
    <name type="scientific">Staphylococcus aureus (strain JH1)</name>
    <dbReference type="NCBI Taxonomy" id="359787"/>
    <lineage>
        <taxon>Bacteria</taxon>
        <taxon>Bacillati</taxon>
        <taxon>Bacillota</taxon>
        <taxon>Bacilli</taxon>
        <taxon>Bacillales</taxon>
        <taxon>Staphylococcaceae</taxon>
        <taxon>Staphylococcus</taxon>
    </lineage>
</organism>
<evidence type="ECO:0000255" key="1">
    <source>
        <dbReference type="HAMAP-Rule" id="MF_01237"/>
    </source>
</evidence>
<name>NANA_STAA2</name>
<sequence>MNKDLKGLYAALLVPFDENGQVNEQGLKQIAQNAIETEELDGLYVNGSSGENFLLNTEQKKQVFKVAKEAVGDKVKLIAQVGSLDLNEAIELGKYATELGYDALSAVTPFYYPFTFEEIRDYYFDIIEATQNNMIIYAIPDLTGVNISIEQFSELFNHEKIVGVKYTAPNFFLLERIRKAFPDKLILSGFDEMLVQATISGVDGAIGSTYNVNGRRARKIFDLARQGQIQEAYQLQHDSNDIIETVLSMGIYPTLKEILRHRDIDAGLPKRPFKPFNEAHRQTLDQLIAKYDL</sequence>
<comment type="function">
    <text evidence="1">Catalyzes the reversible aldol cleavage of N-acetylneuraminic acid (sialic acid; Neu5Ac) to form pyruvate and N-acetylmannosamine (ManNAc) via a Schiff base intermediate.</text>
</comment>
<comment type="catalytic activity">
    <reaction evidence="1">
        <text>aceneuramate = aldehydo-N-acetyl-D-mannosamine + pyruvate</text>
        <dbReference type="Rhea" id="RHEA:23296"/>
        <dbReference type="ChEBI" id="CHEBI:15361"/>
        <dbReference type="ChEBI" id="CHEBI:17122"/>
        <dbReference type="ChEBI" id="CHEBI:173083"/>
        <dbReference type="EC" id="4.1.3.3"/>
    </reaction>
</comment>
<comment type="pathway">
    <text evidence="1">Amino-sugar metabolism; N-acetylneuraminate degradation; D-fructose 6-phosphate from N-acetylneuraminate: step 1/5.</text>
</comment>
<comment type="subunit">
    <text evidence="1">Homotetramer.</text>
</comment>
<comment type="subcellular location">
    <subcellularLocation>
        <location evidence="1">Cytoplasm</location>
    </subcellularLocation>
</comment>
<comment type="similarity">
    <text evidence="1">Belongs to the DapA family. NanA subfamily.</text>
</comment>
<gene>
    <name evidence="1" type="primary">nanA</name>
    <name type="ordered locus">SaurJH1_0305</name>
</gene>
<dbReference type="EC" id="4.1.3.3" evidence="1"/>
<dbReference type="EMBL" id="CP000736">
    <property type="protein sequence ID" value="ABR51167.1"/>
    <property type="molecule type" value="Genomic_DNA"/>
</dbReference>
<dbReference type="SMR" id="A6TY99"/>
<dbReference type="KEGG" id="sah:SaurJH1_0305"/>
<dbReference type="HOGENOM" id="CLU_049343_5_1_9"/>
<dbReference type="UniPathway" id="UPA00629">
    <property type="reaction ID" value="UER00680"/>
</dbReference>
<dbReference type="GO" id="GO:0005829">
    <property type="term" value="C:cytosol"/>
    <property type="evidence" value="ECO:0007669"/>
    <property type="project" value="TreeGrafter"/>
</dbReference>
<dbReference type="GO" id="GO:0008747">
    <property type="term" value="F:N-acetylneuraminate lyase activity"/>
    <property type="evidence" value="ECO:0007669"/>
    <property type="project" value="UniProtKB-UniRule"/>
</dbReference>
<dbReference type="GO" id="GO:0005975">
    <property type="term" value="P:carbohydrate metabolic process"/>
    <property type="evidence" value="ECO:0007669"/>
    <property type="project" value="UniProtKB-UniRule"/>
</dbReference>
<dbReference type="GO" id="GO:0019262">
    <property type="term" value="P:N-acetylneuraminate catabolic process"/>
    <property type="evidence" value="ECO:0007669"/>
    <property type="project" value="UniProtKB-UniRule"/>
</dbReference>
<dbReference type="CDD" id="cd00954">
    <property type="entry name" value="NAL"/>
    <property type="match status" value="1"/>
</dbReference>
<dbReference type="FunFam" id="3.20.20.70:FF:000039">
    <property type="entry name" value="N-acetylneuraminate lyase"/>
    <property type="match status" value="1"/>
</dbReference>
<dbReference type="Gene3D" id="3.20.20.70">
    <property type="entry name" value="Aldolase class I"/>
    <property type="match status" value="1"/>
</dbReference>
<dbReference type="HAMAP" id="MF_01237">
    <property type="entry name" value="N_acetylneuram_lyase"/>
    <property type="match status" value="1"/>
</dbReference>
<dbReference type="InterPro" id="IPR013785">
    <property type="entry name" value="Aldolase_TIM"/>
</dbReference>
<dbReference type="InterPro" id="IPR002220">
    <property type="entry name" value="DapA-like"/>
</dbReference>
<dbReference type="InterPro" id="IPR005264">
    <property type="entry name" value="NanA"/>
</dbReference>
<dbReference type="InterPro" id="IPR020625">
    <property type="entry name" value="Schiff_base-form_aldolases_AS"/>
</dbReference>
<dbReference type="NCBIfam" id="NF003164">
    <property type="entry name" value="PRK04147.1"/>
    <property type="match status" value="1"/>
</dbReference>
<dbReference type="PANTHER" id="PTHR42849">
    <property type="entry name" value="N-ACETYLNEURAMINATE LYASE"/>
    <property type="match status" value="1"/>
</dbReference>
<dbReference type="PANTHER" id="PTHR42849:SF1">
    <property type="entry name" value="N-ACETYLNEURAMINATE LYASE"/>
    <property type="match status" value="1"/>
</dbReference>
<dbReference type="Pfam" id="PF00701">
    <property type="entry name" value="DHDPS"/>
    <property type="match status" value="1"/>
</dbReference>
<dbReference type="PIRSF" id="PIRSF001365">
    <property type="entry name" value="DHDPS"/>
    <property type="match status" value="1"/>
</dbReference>
<dbReference type="PRINTS" id="PR00146">
    <property type="entry name" value="DHPICSNTHASE"/>
</dbReference>
<dbReference type="SMART" id="SM01130">
    <property type="entry name" value="DHDPS"/>
    <property type="match status" value="1"/>
</dbReference>
<dbReference type="SUPFAM" id="SSF51569">
    <property type="entry name" value="Aldolase"/>
    <property type="match status" value="1"/>
</dbReference>
<dbReference type="PROSITE" id="PS00666">
    <property type="entry name" value="DHDPS_2"/>
    <property type="match status" value="1"/>
</dbReference>
<protein>
    <recommendedName>
        <fullName evidence="1">N-acetylneuraminate lyase</fullName>
        <shortName evidence="1">NAL</shortName>
        <shortName evidence="1">Neu5Ac lyase</shortName>
        <ecNumber evidence="1">4.1.3.3</ecNumber>
    </recommendedName>
    <alternativeName>
        <fullName evidence="1">N-acetylneuraminate pyruvate-lyase</fullName>
    </alternativeName>
    <alternativeName>
        <fullName evidence="1">N-acetylneuraminic acid aldolase</fullName>
    </alternativeName>
    <alternativeName>
        <fullName evidence="1">Sialate lyase</fullName>
    </alternativeName>
    <alternativeName>
        <fullName evidence="1">Sialic acid aldolase</fullName>
    </alternativeName>
    <alternativeName>
        <fullName evidence="1">Sialic acid lyase</fullName>
    </alternativeName>
</protein>